<accession>Q73AH3</accession>
<feature type="chain" id="PRO_0000162313" description="Small, acid-soluble spore protein H 2">
    <location>
        <begin position="1"/>
        <end position="59"/>
    </location>
</feature>
<name>SSPH2_BACC1</name>
<keyword id="KW-0749">Sporulation</keyword>
<dbReference type="EMBL" id="AE017194">
    <property type="protein sequence ID" value="AAS40732.1"/>
    <property type="molecule type" value="Genomic_DNA"/>
</dbReference>
<dbReference type="KEGG" id="bca:BCE_1806"/>
<dbReference type="HOGENOM" id="CLU_191960_2_1_9"/>
<dbReference type="Proteomes" id="UP000002527">
    <property type="component" value="Chromosome"/>
</dbReference>
<dbReference type="GO" id="GO:0042601">
    <property type="term" value="C:endospore-forming forespore"/>
    <property type="evidence" value="ECO:0007669"/>
    <property type="project" value="InterPro"/>
</dbReference>
<dbReference type="GO" id="GO:0030436">
    <property type="term" value="P:asexual sporulation"/>
    <property type="evidence" value="ECO:0007669"/>
    <property type="project" value="UniProtKB-UniRule"/>
</dbReference>
<dbReference type="GO" id="GO:0030435">
    <property type="term" value="P:sporulation resulting in formation of a cellular spore"/>
    <property type="evidence" value="ECO:0007669"/>
    <property type="project" value="UniProtKB-KW"/>
</dbReference>
<dbReference type="HAMAP" id="MF_00667">
    <property type="entry name" value="SspH"/>
    <property type="match status" value="1"/>
</dbReference>
<dbReference type="InterPro" id="IPR012610">
    <property type="entry name" value="SASP_SspH"/>
</dbReference>
<dbReference type="NCBIfam" id="TIGR02861">
    <property type="entry name" value="SASP_H"/>
    <property type="match status" value="1"/>
</dbReference>
<dbReference type="Pfam" id="PF08141">
    <property type="entry name" value="SspH"/>
    <property type="match status" value="1"/>
</dbReference>
<comment type="subcellular location">
    <subcellularLocation>
        <location evidence="1">Spore core</location>
    </subcellularLocation>
</comment>
<comment type="induction">
    <text evidence="1">Expressed only in the forespore compartment of sporulating cells.</text>
</comment>
<comment type="similarity">
    <text evidence="1">Belongs to the SspH family.</text>
</comment>
<sequence length="59" mass="6628">MNIQRAKELSVSAEQANVSFQGMPVMIQHVDESNETARIYEVKNPGRELTVPVNSLEEI</sequence>
<organism>
    <name type="scientific">Bacillus cereus (strain ATCC 10987 / NRS 248)</name>
    <dbReference type="NCBI Taxonomy" id="222523"/>
    <lineage>
        <taxon>Bacteria</taxon>
        <taxon>Bacillati</taxon>
        <taxon>Bacillota</taxon>
        <taxon>Bacilli</taxon>
        <taxon>Bacillales</taxon>
        <taxon>Bacillaceae</taxon>
        <taxon>Bacillus</taxon>
        <taxon>Bacillus cereus group</taxon>
    </lineage>
</organism>
<proteinExistence type="inferred from homology"/>
<gene>
    <name evidence="1" type="primary">sspH2</name>
    <name type="ordered locus">BCE_1806</name>
</gene>
<protein>
    <recommendedName>
        <fullName evidence="1">Small, acid-soluble spore protein H 2</fullName>
        <shortName evidence="1">SASP H 2</shortName>
    </recommendedName>
</protein>
<evidence type="ECO:0000255" key="1">
    <source>
        <dbReference type="HAMAP-Rule" id="MF_00667"/>
    </source>
</evidence>
<reference key="1">
    <citation type="journal article" date="2004" name="Nucleic Acids Res.">
        <title>The genome sequence of Bacillus cereus ATCC 10987 reveals metabolic adaptations and a large plasmid related to Bacillus anthracis pXO1.</title>
        <authorList>
            <person name="Rasko D.A."/>
            <person name="Ravel J."/>
            <person name="Oekstad O.A."/>
            <person name="Helgason E."/>
            <person name="Cer R.Z."/>
            <person name="Jiang L."/>
            <person name="Shores K.A."/>
            <person name="Fouts D.E."/>
            <person name="Tourasse N.J."/>
            <person name="Angiuoli S.V."/>
            <person name="Kolonay J.F."/>
            <person name="Nelson W.C."/>
            <person name="Kolstoe A.-B."/>
            <person name="Fraser C.M."/>
            <person name="Read T.D."/>
        </authorList>
    </citation>
    <scope>NUCLEOTIDE SEQUENCE [LARGE SCALE GENOMIC DNA]</scope>
    <source>
        <strain>ATCC 10987 / NRS 248</strain>
    </source>
</reference>